<accession>C4K4R2</accession>
<sequence length="319" mass="35154">MKILLANPRGFCAGVYRAISIVESALKIYGPPIYVRHEVVHNRYVVEDLRKRGAIFIEHISQVPDGSVLIFSAHGVSQAVKAQAKARQLKILFDATCPLVTKVHMEVLRASRKGQEAILIGHAGHPEVEGTMGQYDNASAGVYLVESVEDVNQLKVKDENNLCFMTQTTLSVDDTLEITSALQKRFPKIIGPRKDDICYATTNRQQAVRELSEKSDMVLVVGSKNSSNSNRLAELAKRMGKPAYLIDSDADIHADWLKNIKYIGVTAGASAPDVLVQKVIITLQSLGADESIEMMGQEENIVFEIPKQLRIHATEISCS</sequence>
<gene>
    <name evidence="1" type="primary">ispH</name>
    <name type="ordered locus">HDEF_0834</name>
</gene>
<organism>
    <name type="scientific">Hamiltonella defensa subsp. Acyrthosiphon pisum (strain 5AT)</name>
    <dbReference type="NCBI Taxonomy" id="572265"/>
    <lineage>
        <taxon>Bacteria</taxon>
        <taxon>Pseudomonadati</taxon>
        <taxon>Pseudomonadota</taxon>
        <taxon>Gammaproteobacteria</taxon>
        <taxon>Enterobacterales</taxon>
        <taxon>Enterobacteriaceae</taxon>
        <taxon>aphid secondary symbionts</taxon>
        <taxon>Candidatus Hamiltonella</taxon>
    </lineage>
</organism>
<keyword id="KW-0004">4Fe-4S</keyword>
<keyword id="KW-0408">Iron</keyword>
<keyword id="KW-0411">Iron-sulfur</keyword>
<keyword id="KW-0414">Isoprene biosynthesis</keyword>
<keyword id="KW-0479">Metal-binding</keyword>
<keyword id="KW-0560">Oxidoreductase</keyword>
<dbReference type="EC" id="1.17.7.4" evidence="1"/>
<dbReference type="EMBL" id="CP001277">
    <property type="protein sequence ID" value="ACQ67555.1"/>
    <property type="molecule type" value="Genomic_DNA"/>
</dbReference>
<dbReference type="RefSeq" id="WP_015873374.1">
    <property type="nucleotide sequence ID" value="NC_012751.1"/>
</dbReference>
<dbReference type="SMR" id="C4K4R2"/>
<dbReference type="STRING" id="572265.HDEF_0834"/>
<dbReference type="GeneID" id="66260669"/>
<dbReference type="KEGG" id="hde:HDEF_0834"/>
<dbReference type="eggNOG" id="COG0761">
    <property type="taxonomic scope" value="Bacteria"/>
</dbReference>
<dbReference type="HOGENOM" id="CLU_027486_1_1_6"/>
<dbReference type="UniPathway" id="UPA00056">
    <property type="reaction ID" value="UER00097"/>
</dbReference>
<dbReference type="UniPathway" id="UPA00059">
    <property type="reaction ID" value="UER00105"/>
</dbReference>
<dbReference type="Proteomes" id="UP000002334">
    <property type="component" value="Chromosome"/>
</dbReference>
<dbReference type="GO" id="GO:0051539">
    <property type="term" value="F:4 iron, 4 sulfur cluster binding"/>
    <property type="evidence" value="ECO:0007669"/>
    <property type="project" value="UniProtKB-UniRule"/>
</dbReference>
<dbReference type="GO" id="GO:0051745">
    <property type="term" value="F:4-hydroxy-3-methylbut-2-enyl diphosphate reductase activity"/>
    <property type="evidence" value="ECO:0007669"/>
    <property type="project" value="UniProtKB-UniRule"/>
</dbReference>
<dbReference type="GO" id="GO:0046872">
    <property type="term" value="F:metal ion binding"/>
    <property type="evidence" value="ECO:0007669"/>
    <property type="project" value="UniProtKB-KW"/>
</dbReference>
<dbReference type="GO" id="GO:0050992">
    <property type="term" value="P:dimethylallyl diphosphate biosynthetic process"/>
    <property type="evidence" value="ECO:0007669"/>
    <property type="project" value="UniProtKB-UniRule"/>
</dbReference>
<dbReference type="GO" id="GO:0019288">
    <property type="term" value="P:isopentenyl diphosphate biosynthetic process, methylerythritol 4-phosphate pathway"/>
    <property type="evidence" value="ECO:0007669"/>
    <property type="project" value="UniProtKB-UniRule"/>
</dbReference>
<dbReference type="GO" id="GO:0016114">
    <property type="term" value="P:terpenoid biosynthetic process"/>
    <property type="evidence" value="ECO:0007669"/>
    <property type="project" value="UniProtKB-UniRule"/>
</dbReference>
<dbReference type="CDD" id="cd13944">
    <property type="entry name" value="lytB_ispH"/>
    <property type="match status" value="1"/>
</dbReference>
<dbReference type="Gene3D" id="3.40.50.11270">
    <property type="match status" value="1"/>
</dbReference>
<dbReference type="Gene3D" id="3.40.1010.20">
    <property type="entry name" value="4-hydroxy-3-methylbut-2-enyl diphosphate reductase, catalytic domain"/>
    <property type="match status" value="2"/>
</dbReference>
<dbReference type="HAMAP" id="MF_00191">
    <property type="entry name" value="IspH"/>
    <property type="match status" value="1"/>
</dbReference>
<dbReference type="InterPro" id="IPR003451">
    <property type="entry name" value="LytB/IspH"/>
</dbReference>
<dbReference type="NCBIfam" id="TIGR00216">
    <property type="entry name" value="ispH_lytB"/>
    <property type="match status" value="1"/>
</dbReference>
<dbReference type="NCBIfam" id="NF002188">
    <property type="entry name" value="PRK01045.1-2"/>
    <property type="match status" value="1"/>
</dbReference>
<dbReference type="NCBIfam" id="NF002190">
    <property type="entry name" value="PRK01045.1-4"/>
    <property type="match status" value="1"/>
</dbReference>
<dbReference type="PANTHER" id="PTHR30426">
    <property type="entry name" value="4-HYDROXY-3-METHYLBUT-2-ENYL DIPHOSPHATE REDUCTASE"/>
    <property type="match status" value="1"/>
</dbReference>
<dbReference type="PANTHER" id="PTHR30426:SF0">
    <property type="entry name" value="4-HYDROXY-3-METHYLBUT-2-ENYL DIPHOSPHATE REDUCTASE"/>
    <property type="match status" value="1"/>
</dbReference>
<dbReference type="Pfam" id="PF02401">
    <property type="entry name" value="LYTB"/>
    <property type="match status" value="1"/>
</dbReference>
<comment type="function">
    <text evidence="1">Catalyzes the conversion of 1-hydroxy-2-methyl-2-(E)-butenyl 4-diphosphate (HMBPP) into a mixture of isopentenyl diphosphate (IPP) and dimethylallyl diphosphate (DMAPP). Acts in the terminal step of the DOXP/MEP pathway for isoprenoid precursor biosynthesis.</text>
</comment>
<comment type="catalytic activity">
    <reaction evidence="1">
        <text>isopentenyl diphosphate + 2 oxidized [2Fe-2S]-[ferredoxin] + H2O = (2E)-4-hydroxy-3-methylbut-2-enyl diphosphate + 2 reduced [2Fe-2S]-[ferredoxin] + 2 H(+)</text>
        <dbReference type="Rhea" id="RHEA:24488"/>
        <dbReference type="Rhea" id="RHEA-COMP:10000"/>
        <dbReference type="Rhea" id="RHEA-COMP:10001"/>
        <dbReference type="ChEBI" id="CHEBI:15377"/>
        <dbReference type="ChEBI" id="CHEBI:15378"/>
        <dbReference type="ChEBI" id="CHEBI:33737"/>
        <dbReference type="ChEBI" id="CHEBI:33738"/>
        <dbReference type="ChEBI" id="CHEBI:128753"/>
        <dbReference type="ChEBI" id="CHEBI:128769"/>
        <dbReference type="EC" id="1.17.7.4"/>
    </reaction>
</comment>
<comment type="catalytic activity">
    <reaction evidence="1">
        <text>dimethylallyl diphosphate + 2 oxidized [2Fe-2S]-[ferredoxin] + H2O = (2E)-4-hydroxy-3-methylbut-2-enyl diphosphate + 2 reduced [2Fe-2S]-[ferredoxin] + 2 H(+)</text>
        <dbReference type="Rhea" id="RHEA:24825"/>
        <dbReference type="Rhea" id="RHEA-COMP:10000"/>
        <dbReference type="Rhea" id="RHEA-COMP:10001"/>
        <dbReference type="ChEBI" id="CHEBI:15377"/>
        <dbReference type="ChEBI" id="CHEBI:15378"/>
        <dbReference type="ChEBI" id="CHEBI:33737"/>
        <dbReference type="ChEBI" id="CHEBI:33738"/>
        <dbReference type="ChEBI" id="CHEBI:57623"/>
        <dbReference type="ChEBI" id="CHEBI:128753"/>
        <dbReference type="EC" id="1.17.7.4"/>
    </reaction>
</comment>
<comment type="cofactor">
    <cofactor evidence="1">
        <name>[4Fe-4S] cluster</name>
        <dbReference type="ChEBI" id="CHEBI:49883"/>
    </cofactor>
    <text evidence="1">Binds 1 [4Fe-4S] cluster per subunit.</text>
</comment>
<comment type="pathway">
    <text evidence="1">Isoprenoid biosynthesis; dimethylallyl diphosphate biosynthesis; dimethylallyl diphosphate from (2E)-4-hydroxy-3-methylbutenyl diphosphate: step 1/1.</text>
</comment>
<comment type="pathway">
    <text evidence="1">Isoprenoid biosynthesis; isopentenyl diphosphate biosynthesis via DXP pathway; isopentenyl diphosphate from 1-deoxy-D-xylulose 5-phosphate: step 6/6.</text>
</comment>
<comment type="subunit">
    <text evidence="1">Homodimer.</text>
</comment>
<comment type="similarity">
    <text evidence="1">Belongs to the IspH family.</text>
</comment>
<feature type="chain" id="PRO_1000204006" description="4-hydroxy-3-methylbut-2-enyl diphosphate reductase">
    <location>
        <begin position="1"/>
        <end position="319"/>
    </location>
</feature>
<feature type="active site" description="Proton donor" evidence="1">
    <location>
        <position position="127"/>
    </location>
</feature>
<feature type="binding site" evidence="1">
    <location>
        <position position="12"/>
    </location>
    <ligand>
        <name>[4Fe-4S] cluster</name>
        <dbReference type="ChEBI" id="CHEBI:49883"/>
    </ligand>
</feature>
<feature type="binding site" evidence="1">
    <location>
        <position position="41"/>
    </location>
    <ligand>
        <name>(2E)-4-hydroxy-3-methylbut-2-enyl diphosphate</name>
        <dbReference type="ChEBI" id="CHEBI:128753"/>
    </ligand>
</feature>
<feature type="binding site" evidence="1">
    <location>
        <position position="41"/>
    </location>
    <ligand>
        <name>dimethylallyl diphosphate</name>
        <dbReference type="ChEBI" id="CHEBI:57623"/>
    </ligand>
</feature>
<feature type="binding site" evidence="1">
    <location>
        <position position="41"/>
    </location>
    <ligand>
        <name>isopentenyl diphosphate</name>
        <dbReference type="ChEBI" id="CHEBI:128769"/>
    </ligand>
</feature>
<feature type="binding site" evidence="1">
    <location>
        <position position="74"/>
    </location>
    <ligand>
        <name>(2E)-4-hydroxy-3-methylbut-2-enyl diphosphate</name>
        <dbReference type="ChEBI" id="CHEBI:128753"/>
    </ligand>
</feature>
<feature type="binding site" evidence="1">
    <location>
        <position position="74"/>
    </location>
    <ligand>
        <name>dimethylallyl diphosphate</name>
        <dbReference type="ChEBI" id="CHEBI:57623"/>
    </ligand>
</feature>
<feature type="binding site" evidence="1">
    <location>
        <position position="74"/>
    </location>
    <ligand>
        <name>isopentenyl diphosphate</name>
        <dbReference type="ChEBI" id="CHEBI:128769"/>
    </ligand>
</feature>
<feature type="binding site" evidence="1">
    <location>
        <position position="97"/>
    </location>
    <ligand>
        <name>[4Fe-4S] cluster</name>
        <dbReference type="ChEBI" id="CHEBI:49883"/>
    </ligand>
</feature>
<feature type="binding site" evidence="1">
    <location>
        <position position="125"/>
    </location>
    <ligand>
        <name>(2E)-4-hydroxy-3-methylbut-2-enyl diphosphate</name>
        <dbReference type="ChEBI" id="CHEBI:128753"/>
    </ligand>
</feature>
<feature type="binding site" evidence="1">
    <location>
        <position position="125"/>
    </location>
    <ligand>
        <name>dimethylallyl diphosphate</name>
        <dbReference type="ChEBI" id="CHEBI:57623"/>
    </ligand>
</feature>
<feature type="binding site" evidence="1">
    <location>
        <position position="125"/>
    </location>
    <ligand>
        <name>isopentenyl diphosphate</name>
        <dbReference type="ChEBI" id="CHEBI:128769"/>
    </ligand>
</feature>
<feature type="binding site" evidence="1">
    <location>
        <position position="168"/>
    </location>
    <ligand>
        <name>(2E)-4-hydroxy-3-methylbut-2-enyl diphosphate</name>
        <dbReference type="ChEBI" id="CHEBI:128753"/>
    </ligand>
</feature>
<feature type="binding site" evidence="1">
    <location>
        <position position="198"/>
    </location>
    <ligand>
        <name>[4Fe-4S] cluster</name>
        <dbReference type="ChEBI" id="CHEBI:49883"/>
    </ligand>
</feature>
<feature type="binding site" evidence="1">
    <location>
        <position position="226"/>
    </location>
    <ligand>
        <name>(2E)-4-hydroxy-3-methylbut-2-enyl diphosphate</name>
        <dbReference type="ChEBI" id="CHEBI:128753"/>
    </ligand>
</feature>
<feature type="binding site" evidence="1">
    <location>
        <position position="226"/>
    </location>
    <ligand>
        <name>dimethylallyl diphosphate</name>
        <dbReference type="ChEBI" id="CHEBI:57623"/>
    </ligand>
</feature>
<feature type="binding site" evidence="1">
    <location>
        <position position="226"/>
    </location>
    <ligand>
        <name>isopentenyl diphosphate</name>
        <dbReference type="ChEBI" id="CHEBI:128769"/>
    </ligand>
</feature>
<feature type="binding site" evidence="1">
    <location>
        <position position="227"/>
    </location>
    <ligand>
        <name>(2E)-4-hydroxy-3-methylbut-2-enyl diphosphate</name>
        <dbReference type="ChEBI" id="CHEBI:128753"/>
    </ligand>
</feature>
<feature type="binding site" evidence="1">
    <location>
        <position position="227"/>
    </location>
    <ligand>
        <name>dimethylallyl diphosphate</name>
        <dbReference type="ChEBI" id="CHEBI:57623"/>
    </ligand>
</feature>
<feature type="binding site" evidence="1">
    <location>
        <position position="227"/>
    </location>
    <ligand>
        <name>isopentenyl diphosphate</name>
        <dbReference type="ChEBI" id="CHEBI:128769"/>
    </ligand>
</feature>
<feature type="binding site" evidence="1">
    <location>
        <position position="228"/>
    </location>
    <ligand>
        <name>(2E)-4-hydroxy-3-methylbut-2-enyl diphosphate</name>
        <dbReference type="ChEBI" id="CHEBI:128753"/>
    </ligand>
</feature>
<feature type="binding site" evidence="1">
    <location>
        <position position="228"/>
    </location>
    <ligand>
        <name>dimethylallyl diphosphate</name>
        <dbReference type="ChEBI" id="CHEBI:57623"/>
    </ligand>
</feature>
<feature type="binding site" evidence="1">
    <location>
        <position position="228"/>
    </location>
    <ligand>
        <name>isopentenyl diphosphate</name>
        <dbReference type="ChEBI" id="CHEBI:128769"/>
    </ligand>
</feature>
<feature type="binding site" evidence="1">
    <location>
        <position position="270"/>
    </location>
    <ligand>
        <name>(2E)-4-hydroxy-3-methylbut-2-enyl diphosphate</name>
        <dbReference type="ChEBI" id="CHEBI:128753"/>
    </ligand>
</feature>
<feature type="binding site" evidence="1">
    <location>
        <position position="270"/>
    </location>
    <ligand>
        <name>dimethylallyl diphosphate</name>
        <dbReference type="ChEBI" id="CHEBI:57623"/>
    </ligand>
</feature>
<feature type="binding site" evidence="1">
    <location>
        <position position="270"/>
    </location>
    <ligand>
        <name>isopentenyl diphosphate</name>
        <dbReference type="ChEBI" id="CHEBI:128769"/>
    </ligand>
</feature>
<name>ISPH_HAMD5</name>
<evidence type="ECO:0000255" key="1">
    <source>
        <dbReference type="HAMAP-Rule" id="MF_00191"/>
    </source>
</evidence>
<protein>
    <recommendedName>
        <fullName evidence="1">4-hydroxy-3-methylbut-2-enyl diphosphate reductase</fullName>
        <shortName evidence="1">HMBPP reductase</shortName>
        <ecNumber evidence="1">1.17.7.4</ecNumber>
    </recommendedName>
</protein>
<proteinExistence type="inferred from homology"/>
<reference key="1">
    <citation type="journal article" date="2009" name="Proc. Natl. Acad. Sci. U.S.A.">
        <title>Hamiltonella defensa, genome evolution of protective bacterial endosymbiont from pathogenic ancestors.</title>
        <authorList>
            <person name="Degnan P.H."/>
            <person name="Yu Y."/>
            <person name="Sisneros N."/>
            <person name="Wing R.A."/>
            <person name="Moran N.A."/>
        </authorList>
    </citation>
    <scope>NUCLEOTIDE SEQUENCE [LARGE SCALE GENOMIC DNA]</scope>
    <source>
        <strain>5AT</strain>
    </source>
</reference>